<accession>Q9ZI40</accession>
<reference key="1">
    <citation type="journal article" date="2000" name="J. Mol. Evol.">
        <title>Phylogenetic depth of the bacterial genera Aquifex and Thermotoga inferred from analysis of ribosomal protein, elongation factor, and RNA polymerase subunit sequences.</title>
        <authorList>
            <person name="Bocchetta M."/>
            <person name="Gribaldo S."/>
            <person name="Sanangelantoni A.M."/>
            <person name="Cammarano P."/>
        </authorList>
    </citation>
    <scope>NUCLEOTIDE SEQUENCE [GENOMIC DNA]</scope>
    <source>
        <strain>DSM 6858 / JCM 9492 / Kol5A</strain>
    </source>
</reference>
<reference key="2">
    <citation type="unpublished observations" date="2000-03">
        <authorList>
            <person name="Veuthey A.-L."/>
        </authorList>
    </citation>
    <scope>IDENTIFICATION OF PROBABLE FRAMESHIFT</scope>
</reference>
<evidence type="ECO:0000255" key="1">
    <source>
        <dbReference type="HAMAP-Rule" id="MF_01333"/>
    </source>
</evidence>
<evidence type="ECO:0000305" key="2"/>
<keyword id="KW-0687">Ribonucleoprotein</keyword>
<keyword id="KW-0689">Ribosomal protein</keyword>
<keyword id="KW-0694">RNA-binding</keyword>
<keyword id="KW-0699">rRNA-binding</keyword>
<keyword id="KW-0820">tRNA-binding</keyword>
<organism>
    <name type="scientific">Aquifex pyrophilus</name>
    <dbReference type="NCBI Taxonomy" id="2714"/>
    <lineage>
        <taxon>Bacteria</taxon>
        <taxon>Pseudomonadati</taxon>
        <taxon>Aquificota</taxon>
        <taxon>Aquificia</taxon>
        <taxon>Aquificales</taxon>
        <taxon>Aquificaceae</taxon>
        <taxon>Aquifex</taxon>
    </lineage>
</organism>
<dbReference type="EMBL" id="AF040101">
    <property type="protein sequence ID" value="AAD08795.1"/>
    <property type="molecule type" value="Genomic_DNA"/>
</dbReference>
<dbReference type="SMR" id="Q9ZI40"/>
<dbReference type="GO" id="GO:1990904">
    <property type="term" value="C:ribonucleoprotein complex"/>
    <property type="evidence" value="ECO:0007669"/>
    <property type="project" value="UniProtKB-KW"/>
</dbReference>
<dbReference type="GO" id="GO:0005840">
    <property type="term" value="C:ribosome"/>
    <property type="evidence" value="ECO:0007669"/>
    <property type="project" value="UniProtKB-KW"/>
</dbReference>
<dbReference type="GO" id="GO:0019843">
    <property type="term" value="F:rRNA binding"/>
    <property type="evidence" value="ECO:0007669"/>
    <property type="project" value="UniProtKB-UniRule"/>
</dbReference>
<dbReference type="GO" id="GO:0003735">
    <property type="term" value="F:structural constituent of ribosome"/>
    <property type="evidence" value="ECO:0007669"/>
    <property type="project" value="InterPro"/>
</dbReference>
<dbReference type="GO" id="GO:0000049">
    <property type="term" value="F:tRNA binding"/>
    <property type="evidence" value="ECO:0007669"/>
    <property type="project" value="UniProtKB-UniRule"/>
</dbReference>
<dbReference type="GO" id="GO:0006412">
    <property type="term" value="P:translation"/>
    <property type="evidence" value="ECO:0007669"/>
    <property type="project" value="UniProtKB-UniRule"/>
</dbReference>
<dbReference type="FunFam" id="3.30.1440.10:FF:000001">
    <property type="entry name" value="50S ribosomal protein L5"/>
    <property type="match status" value="1"/>
</dbReference>
<dbReference type="Gene3D" id="3.30.1440.10">
    <property type="match status" value="1"/>
</dbReference>
<dbReference type="HAMAP" id="MF_01333_B">
    <property type="entry name" value="Ribosomal_uL5_B"/>
    <property type="match status" value="1"/>
</dbReference>
<dbReference type="InterPro" id="IPR002132">
    <property type="entry name" value="Ribosomal_uL5"/>
</dbReference>
<dbReference type="InterPro" id="IPR020930">
    <property type="entry name" value="Ribosomal_uL5_bac-type"/>
</dbReference>
<dbReference type="InterPro" id="IPR031309">
    <property type="entry name" value="Ribosomal_uL5_C"/>
</dbReference>
<dbReference type="InterPro" id="IPR020929">
    <property type="entry name" value="Ribosomal_uL5_CS"/>
</dbReference>
<dbReference type="InterPro" id="IPR022803">
    <property type="entry name" value="Ribosomal_uL5_dom_sf"/>
</dbReference>
<dbReference type="InterPro" id="IPR031310">
    <property type="entry name" value="Ribosomal_uL5_N"/>
</dbReference>
<dbReference type="NCBIfam" id="NF000585">
    <property type="entry name" value="PRK00010.1"/>
    <property type="match status" value="1"/>
</dbReference>
<dbReference type="PANTHER" id="PTHR11994">
    <property type="entry name" value="60S RIBOSOMAL PROTEIN L11-RELATED"/>
    <property type="match status" value="1"/>
</dbReference>
<dbReference type="Pfam" id="PF00281">
    <property type="entry name" value="Ribosomal_L5"/>
    <property type="match status" value="1"/>
</dbReference>
<dbReference type="Pfam" id="PF00673">
    <property type="entry name" value="Ribosomal_L5_C"/>
    <property type="match status" value="1"/>
</dbReference>
<dbReference type="PIRSF" id="PIRSF002161">
    <property type="entry name" value="Ribosomal_L5"/>
    <property type="match status" value="1"/>
</dbReference>
<dbReference type="SUPFAM" id="SSF55282">
    <property type="entry name" value="RL5-like"/>
    <property type="match status" value="1"/>
</dbReference>
<dbReference type="PROSITE" id="PS00358">
    <property type="entry name" value="RIBOSOMAL_L5"/>
    <property type="match status" value="1"/>
</dbReference>
<feature type="chain" id="PRO_0000124886" description="Large ribosomal subunit protein uL5">
    <location>
        <begin position="1"/>
        <end position="188"/>
    </location>
</feature>
<feature type="sequence conflict" description="In Ref. 1; AAD08795." evidence="2" ref="1">
    <original>GLPIRAM</original>
    <variation>RTAHKGYVIKCLLSGGNYAEKG</variation>
    <location>
        <begin position="182"/>
        <end position="188"/>
    </location>
</feature>
<name>RL5_AQUPY</name>
<sequence length="188" mass="21385">MSATETKYVPRLYKKYKEEVVPKLIQKFQYKNPMQVPRLVKIVVNMGVGEAVQDIKQLERAVEDLRAITGQQPMITRARKSKAGFKLRKGMPIGCKVTLRNHTMWDFLDKVISVALPRVKDFKGLNPRSFDGRGNYAFGIAEQIVFPEIDYDKVDRIRGMDIIINTTAVSDQESLLATLTLGLPIRAM</sequence>
<protein>
    <recommendedName>
        <fullName evidence="1">Large ribosomal subunit protein uL5</fullName>
    </recommendedName>
    <alternativeName>
        <fullName evidence="2">50S ribosomal protein L5</fullName>
    </alternativeName>
</protein>
<proteinExistence type="inferred from homology"/>
<gene>
    <name evidence="1" type="primary">rplE</name>
    <name evidence="1" type="synonym">rpl5</name>
</gene>
<comment type="function">
    <text evidence="1">This is one of the proteins that bind and probably mediate the attachment of the 5S RNA into the large ribosomal subunit, where it forms part of the central protuberance. In the 70S ribosome it contacts protein S13 of the 30S subunit (bridge B1b), connecting the 2 subunits; this bridge is implicated in subunit movement. Contacts the P site tRNA; the 5S rRNA and some of its associated proteins might help stabilize positioning of ribosome-bound tRNAs.</text>
</comment>
<comment type="subunit">
    <text evidence="1">Part of the 50S ribosomal subunit; part of the 5S rRNA/L5/L18/L25 subcomplex. Contacts the 5S rRNA and the P site tRNA. Forms a bridge to the 30S subunit in the 70S ribosome.</text>
</comment>
<comment type="similarity">
    <text evidence="1">Belongs to the universal ribosomal protein uL5 family.</text>
</comment>